<feature type="chain" id="PRO_0000106656" description="Uncharacterized IS-like element protein MJ0016/MJ1621.1">
    <location>
        <begin position="1"/>
        <end position="58"/>
    </location>
</feature>
<protein>
    <recommendedName>
        <fullName>Uncharacterized IS-like element protein MJ0016/MJ1621.1</fullName>
    </recommendedName>
</protein>
<dbReference type="EMBL" id="L77117">
    <property type="protein sequence ID" value="AAB98001.1"/>
    <property type="molecule type" value="Genomic_DNA"/>
</dbReference>
<dbReference type="EMBL" id="L77117">
    <property type="protein sequence ID" value="AAB99645.1"/>
    <property type="molecule type" value="Genomic_DNA"/>
</dbReference>
<dbReference type="PIR" id="H64301">
    <property type="entry name" value="H64301"/>
</dbReference>
<dbReference type="PaxDb" id="243232-MJ_0016"/>
<dbReference type="EnsemblBacteria" id="AAB98001">
    <property type="protein sequence ID" value="AAB98001"/>
    <property type="gene ID" value="MJ_0016"/>
</dbReference>
<dbReference type="EnsemblBacteria" id="AAB99645">
    <property type="protein sequence ID" value="AAB99645"/>
    <property type="gene ID" value="MJ_1621.1"/>
</dbReference>
<dbReference type="KEGG" id="mja:MJ_0016"/>
<dbReference type="KEGG" id="mja:MJ_1621.1"/>
<dbReference type="HOGENOM" id="CLU_2968473_0_0_2"/>
<dbReference type="InParanoid" id="Q60322"/>
<dbReference type="Proteomes" id="UP000000805">
    <property type="component" value="Chromosome"/>
</dbReference>
<sequence length="58" mass="6622">MLFIDAMPIKTKELVRKTRHERIGISKLIKKTVVLVTIHRKNVGILDIKQLSLPMGSI</sequence>
<name>Y016_METJA</name>
<gene>
    <name type="ordered locus">MJ0016</name>
</gene>
<gene>
    <name type="ordered locus">MJ1621.1</name>
</gene>
<reference key="1">
    <citation type="journal article" date="1996" name="Science">
        <title>Complete genome sequence of the methanogenic archaeon, Methanococcus jannaschii.</title>
        <authorList>
            <person name="Bult C.J."/>
            <person name="White O."/>
            <person name="Olsen G.J."/>
            <person name="Zhou L."/>
            <person name="Fleischmann R.D."/>
            <person name="Sutton G.G."/>
            <person name="Blake J.A."/>
            <person name="FitzGerald L.M."/>
            <person name="Clayton R.A."/>
            <person name="Gocayne J.D."/>
            <person name="Kerlavage A.R."/>
            <person name="Dougherty B.A."/>
            <person name="Tomb J.-F."/>
            <person name="Adams M.D."/>
            <person name="Reich C.I."/>
            <person name="Overbeek R."/>
            <person name="Kirkness E.F."/>
            <person name="Weinstock K.G."/>
            <person name="Merrick J.M."/>
            <person name="Glodek A."/>
            <person name="Scott J.L."/>
            <person name="Geoghagen N.S.M."/>
            <person name="Weidman J.F."/>
            <person name="Fuhrmann J.L."/>
            <person name="Nguyen D."/>
            <person name="Utterback T.R."/>
            <person name="Kelley J.M."/>
            <person name="Peterson J.D."/>
            <person name="Sadow P.W."/>
            <person name="Hanna M.C."/>
            <person name="Cotton M.D."/>
            <person name="Roberts K.M."/>
            <person name="Hurst M.A."/>
            <person name="Kaine B.P."/>
            <person name="Borodovsky M."/>
            <person name="Klenk H.-P."/>
            <person name="Fraser C.M."/>
            <person name="Smith H.O."/>
            <person name="Woese C.R."/>
            <person name="Venter J.C."/>
        </authorList>
    </citation>
    <scope>NUCLEOTIDE SEQUENCE [LARGE SCALE GENOMIC DNA]</scope>
    <source>
        <strain>ATCC 43067 / DSM 2661 / JAL-1 / JCM 10045 / NBRC 100440</strain>
    </source>
</reference>
<proteinExistence type="predicted"/>
<organism>
    <name type="scientific">Methanocaldococcus jannaschii (strain ATCC 43067 / DSM 2661 / JAL-1 / JCM 10045 / NBRC 100440)</name>
    <name type="common">Methanococcus jannaschii</name>
    <dbReference type="NCBI Taxonomy" id="243232"/>
    <lineage>
        <taxon>Archaea</taxon>
        <taxon>Methanobacteriati</taxon>
        <taxon>Methanobacteriota</taxon>
        <taxon>Methanomada group</taxon>
        <taxon>Methanococci</taxon>
        <taxon>Methanococcales</taxon>
        <taxon>Methanocaldococcaceae</taxon>
        <taxon>Methanocaldococcus</taxon>
    </lineage>
</organism>
<accession>Q60322</accession>
<keyword id="KW-1185">Reference proteome</keyword>